<sequence>MAAPPLLSLSQRLLFLSLSLPKPQLAPNPSSFSPTRAASTAPPPPEGAGPAAPSRGDRFLGTQLAAEAAARVLAPEDAERRRRRREKRKALARKPSAAACYGCGAPLQTADEAAPGYVHPATYDLKKRHHQLRTVLCGRCKLLSHGHMITAVGGHGGYPGGKQFVSADQLRDKLSYLRHEKALIIKLVDIVDFNGSFLARVRDFAGANPIILVITKVDLLPRDTDLNCIGDWVVEAVVKKKLNVLSVHLTSSKSLVGVTGVISEIQQEKKGRDVYILGSANVGKSAFISAMLRTMAYKDPVAAAAQKYKPIQSAVPGTTLGPIQIEAFLGGGKLYDTPGVHLHHRQAAVIHADDLPSLAPQSRLRARCFPANDTDVGLSGNSLFWGGLVRIDVVKALPRTRLTFYGPKKLKINMVPTTEADEFYEREVGVTLTPPAGKEKAEGWVGLQGVRELQIKYEESDRPACDIAISGLGWVAVEPLGVPSSNPDESAEEEDNESGELHLRVHVPKPVEIFVRPPLPVGKAASQWYRYQELTEEEEELRPKWHY</sequence>
<organism>
    <name type="scientific">Oryza sativa subsp. japonica</name>
    <name type="common">Rice</name>
    <dbReference type="NCBI Taxonomy" id="39947"/>
    <lineage>
        <taxon>Eukaryota</taxon>
        <taxon>Viridiplantae</taxon>
        <taxon>Streptophyta</taxon>
        <taxon>Embryophyta</taxon>
        <taxon>Tracheophyta</taxon>
        <taxon>Spermatophyta</taxon>
        <taxon>Magnoliopsida</taxon>
        <taxon>Liliopsida</taxon>
        <taxon>Poales</taxon>
        <taxon>Poaceae</taxon>
        <taxon>BOP clade</taxon>
        <taxon>Oryzoideae</taxon>
        <taxon>Oryzeae</taxon>
        <taxon>Oryzinae</taxon>
        <taxon>Oryza</taxon>
        <taxon>Oryza sativa</taxon>
    </lineage>
</organism>
<gene>
    <name type="ordered locus">Os02g0104700</name>
    <name type="ordered locus">LOC_Os02g01440</name>
    <name type="ORF">OJ1212_C06.17</name>
    <name type="ORF">OJA1212_C06.18</name>
</gene>
<accession>Q6YPG5</accession>
<accession>Q0E4R0</accession>
<name>NOS_ORYSJ</name>
<protein>
    <recommendedName>
        <fullName>Putative nitric oxide synthase</fullName>
        <ecNumber>1.14.13.39</ecNumber>
    </recommendedName>
</protein>
<keyword id="KW-0521">NADP</keyword>
<keyword id="KW-0560">Oxidoreductase</keyword>
<keyword id="KW-1185">Reference proteome</keyword>
<evidence type="ECO:0000250" key="1"/>
<evidence type="ECO:0000255" key="2">
    <source>
        <dbReference type="PROSITE-ProRule" id="PRU01058"/>
    </source>
</evidence>
<evidence type="ECO:0000256" key="3">
    <source>
        <dbReference type="SAM" id="MobiDB-lite"/>
    </source>
</evidence>
<feature type="chain" id="PRO_0000213737" description="Putative nitric oxide synthase">
    <location>
        <begin position="1"/>
        <end position="547"/>
    </location>
</feature>
<feature type="domain" description="CP-type G" evidence="2">
    <location>
        <begin position="167"/>
        <end position="343"/>
    </location>
</feature>
<feature type="region of interest" description="Disordered" evidence="3">
    <location>
        <begin position="24"/>
        <end position="57"/>
    </location>
</feature>
<feature type="region of interest" description="Disordered" evidence="3">
    <location>
        <begin position="72"/>
        <end position="91"/>
    </location>
</feature>
<feature type="compositionally biased region" description="Low complexity" evidence="3">
    <location>
        <begin position="24"/>
        <end position="40"/>
    </location>
</feature>
<feature type="compositionally biased region" description="Basic residues" evidence="3">
    <location>
        <begin position="81"/>
        <end position="91"/>
    </location>
</feature>
<proteinExistence type="inferred from homology"/>
<reference key="1">
    <citation type="journal article" date="2005" name="Nature">
        <title>The map-based sequence of the rice genome.</title>
        <authorList>
            <consortium name="International rice genome sequencing project (IRGSP)"/>
        </authorList>
    </citation>
    <scope>NUCLEOTIDE SEQUENCE [LARGE SCALE GENOMIC DNA]</scope>
    <source>
        <strain>cv. Nipponbare</strain>
    </source>
</reference>
<reference key="2">
    <citation type="journal article" date="2008" name="Nucleic Acids Res.">
        <title>The rice annotation project database (RAP-DB): 2008 update.</title>
        <authorList>
            <consortium name="The rice annotation project (RAP)"/>
        </authorList>
    </citation>
    <scope>GENOME REANNOTATION</scope>
    <source>
        <strain>cv. Nipponbare</strain>
    </source>
</reference>
<reference key="3">
    <citation type="journal article" date="2013" name="Rice">
        <title>Improvement of the Oryza sativa Nipponbare reference genome using next generation sequence and optical map data.</title>
        <authorList>
            <person name="Kawahara Y."/>
            <person name="de la Bastide M."/>
            <person name="Hamilton J.P."/>
            <person name="Kanamori H."/>
            <person name="McCombie W.R."/>
            <person name="Ouyang S."/>
            <person name="Schwartz D.C."/>
            <person name="Tanaka T."/>
            <person name="Wu J."/>
            <person name="Zhou S."/>
            <person name="Childs K.L."/>
            <person name="Davidson R.M."/>
            <person name="Lin H."/>
            <person name="Quesada-Ocampo L."/>
            <person name="Vaillancourt B."/>
            <person name="Sakai H."/>
            <person name="Lee S.S."/>
            <person name="Kim J."/>
            <person name="Numa H."/>
            <person name="Itoh T."/>
            <person name="Buell C.R."/>
            <person name="Matsumoto T."/>
        </authorList>
    </citation>
    <scope>GENOME REANNOTATION</scope>
    <source>
        <strain>cv. Nipponbare</strain>
    </source>
</reference>
<dbReference type="EC" id="1.14.13.39"/>
<dbReference type="EMBL" id="AP006720">
    <property type="protein sequence ID" value="BAD06278.1"/>
    <property type="molecule type" value="Genomic_DNA"/>
</dbReference>
<dbReference type="EMBL" id="AP004049">
    <property type="protein sequence ID" value="BAD07538.1"/>
    <property type="molecule type" value="Genomic_DNA"/>
</dbReference>
<dbReference type="EMBL" id="AP008208">
    <property type="protein sequence ID" value="BAF07528.1"/>
    <property type="molecule type" value="Genomic_DNA"/>
</dbReference>
<dbReference type="EMBL" id="AP014958">
    <property type="protein sequence ID" value="BAS76549.1"/>
    <property type="molecule type" value="Genomic_DNA"/>
</dbReference>
<dbReference type="RefSeq" id="XP_015626850.1">
    <property type="nucleotide sequence ID" value="XM_015771364.1"/>
</dbReference>
<dbReference type="SMR" id="Q6YPG5"/>
<dbReference type="FunCoup" id="Q6YPG5">
    <property type="interactions" value="1396"/>
</dbReference>
<dbReference type="STRING" id="39947.Q6YPG5"/>
<dbReference type="PaxDb" id="39947-Q6YPG5"/>
<dbReference type="EnsemblPlants" id="Os02t0104700-01">
    <property type="protein sequence ID" value="Os02t0104700-01"/>
    <property type="gene ID" value="Os02g0104700"/>
</dbReference>
<dbReference type="Gramene" id="Os02t0104700-01">
    <property type="protein sequence ID" value="Os02t0104700-01"/>
    <property type="gene ID" value="Os02g0104700"/>
</dbReference>
<dbReference type="KEGG" id="dosa:Os02g0104700"/>
<dbReference type="eggNOG" id="KOG1249">
    <property type="taxonomic scope" value="Eukaryota"/>
</dbReference>
<dbReference type="HOGENOM" id="CLU_017878_2_1_1"/>
<dbReference type="InParanoid" id="Q6YPG5"/>
<dbReference type="OMA" id="HYNEVQD"/>
<dbReference type="OrthoDB" id="1696305at2759"/>
<dbReference type="PlantReactome" id="R-OSA-5633340">
    <property type="pathway name" value="Citrulline-nitric oxide cycle"/>
</dbReference>
<dbReference type="Proteomes" id="UP000000763">
    <property type="component" value="Chromosome 2"/>
</dbReference>
<dbReference type="Proteomes" id="UP000059680">
    <property type="component" value="Chromosome 2"/>
</dbReference>
<dbReference type="ExpressionAtlas" id="Q6YPG5">
    <property type="expression patterns" value="baseline and differential"/>
</dbReference>
<dbReference type="GO" id="GO:0005525">
    <property type="term" value="F:GTP binding"/>
    <property type="evidence" value="ECO:0007669"/>
    <property type="project" value="InterPro"/>
</dbReference>
<dbReference type="GO" id="GO:0003924">
    <property type="term" value="F:GTPase activity"/>
    <property type="evidence" value="ECO:0007669"/>
    <property type="project" value="InterPro"/>
</dbReference>
<dbReference type="GO" id="GO:0004517">
    <property type="term" value="F:nitric-oxide synthase activity"/>
    <property type="evidence" value="ECO:0007669"/>
    <property type="project" value="UniProtKB-EC"/>
</dbReference>
<dbReference type="CDD" id="cd01855">
    <property type="entry name" value="YqeH"/>
    <property type="match status" value="1"/>
</dbReference>
<dbReference type="Gene3D" id="3.40.50.300">
    <property type="entry name" value="P-loop containing nucleotide triphosphate hydrolases"/>
    <property type="match status" value="1"/>
</dbReference>
<dbReference type="InterPro" id="IPR030378">
    <property type="entry name" value="G_CP_dom"/>
</dbReference>
<dbReference type="InterPro" id="IPR006073">
    <property type="entry name" value="GTP-bd"/>
</dbReference>
<dbReference type="InterPro" id="IPR044229">
    <property type="entry name" value="NOA1"/>
</dbReference>
<dbReference type="InterPro" id="IPR048422">
    <property type="entry name" value="NOA1/YqeH-like_C"/>
</dbReference>
<dbReference type="InterPro" id="IPR027417">
    <property type="entry name" value="P-loop_NTPase"/>
</dbReference>
<dbReference type="PANTHER" id="PTHR47569">
    <property type="entry name" value="NO-ASSOCIATED PROTEIN 1, CHLOROPLASTIC/MITOCHONDRIAL"/>
    <property type="match status" value="1"/>
</dbReference>
<dbReference type="PANTHER" id="PTHR47569:SF2">
    <property type="entry name" value="NO-ASSOCIATED PROTEIN 1, CHLOROPLASTIC_MITOCHONDRIAL"/>
    <property type="match status" value="1"/>
</dbReference>
<dbReference type="Pfam" id="PF01926">
    <property type="entry name" value="MMR_HSR1"/>
    <property type="match status" value="1"/>
</dbReference>
<dbReference type="Pfam" id="PF21516">
    <property type="entry name" value="YqeH-like_C"/>
    <property type="match status" value="1"/>
</dbReference>
<dbReference type="SUPFAM" id="SSF52540">
    <property type="entry name" value="P-loop containing nucleoside triphosphate hydrolases"/>
    <property type="match status" value="1"/>
</dbReference>
<dbReference type="PROSITE" id="PS51721">
    <property type="entry name" value="G_CP"/>
    <property type="match status" value="1"/>
</dbReference>
<comment type="function">
    <text evidence="1">Produces nitric oxide (NO) which is a messenger molecule involved in hormonal signaling and defense responses in plant.</text>
</comment>
<comment type="catalytic activity">
    <reaction>
        <text>2 L-arginine + 3 NADPH + 4 O2 + H(+) = 2 L-citrulline + 2 nitric oxide + 3 NADP(+) + 4 H2O</text>
        <dbReference type="Rhea" id="RHEA:19897"/>
        <dbReference type="ChEBI" id="CHEBI:15377"/>
        <dbReference type="ChEBI" id="CHEBI:15378"/>
        <dbReference type="ChEBI" id="CHEBI:15379"/>
        <dbReference type="ChEBI" id="CHEBI:16480"/>
        <dbReference type="ChEBI" id="CHEBI:32682"/>
        <dbReference type="ChEBI" id="CHEBI:57743"/>
        <dbReference type="ChEBI" id="CHEBI:57783"/>
        <dbReference type="ChEBI" id="CHEBI:58349"/>
        <dbReference type="EC" id="1.14.13.39"/>
    </reaction>
</comment>
<comment type="similarity">
    <text evidence="2">Belongs to the TRAFAC class YlqF/YawG GTPase family. NOA1 subfamily.</text>
</comment>